<keyword id="KW-0687">Ribonucleoprotein</keyword>
<keyword id="KW-0689">Ribosomal protein</keyword>
<keyword id="KW-0694">RNA-binding</keyword>
<keyword id="KW-0699">rRNA-binding</keyword>
<reference key="1">
    <citation type="journal article" date="2007" name="Photosyn. Res.">
        <title>Complete nucleotide sequence of the freshwater unicellular cyanobacterium Synechococcus elongatus PCC 6301 chromosome: gene content and organization.</title>
        <authorList>
            <person name="Sugita C."/>
            <person name="Ogata K."/>
            <person name="Shikata M."/>
            <person name="Jikuya H."/>
            <person name="Takano J."/>
            <person name="Furumichi M."/>
            <person name="Kanehisa M."/>
            <person name="Omata T."/>
            <person name="Sugiura M."/>
            <person name="Sugita M."/>
        </authorList>
    </citation>
    <scope>NUCLEOTIDE SEQUENCE [LARGE SCALE GENOMIC DNA]</scope>
    <source>
        <strain>ATCC 27144 / PCC 6301 / SAUG 1402/1</strain>
    </source>
</reference>
<comment type="function">
    <text evidence="1">This protein binds to 23S rRNA in the presence of protein L20.</text>
</comment>
<comment type="subunit">
    <text evidence="1">Part of the 50S ribosomal subunit. Contacts protein L20.</text>
</comment>
<comment type="similarity">
    <text evidence="1">Belongs to the bacterial ribosomal protein bL21 family.</text>
</comment>
<dbReference type="EMBL" id="AP008231">
    <property type="protein sequence ID" value="BAD78521.1"/>
    <property type="molecule type" value="Genomic_DNA"/>
</dbReference>
<dbReference type="RefSeq" id="WP_011242645.1">
    <property type="nucleotide sequence ID" value="NC_006576.1"/>
</dbReference>
<dbReference type="SMR" id="Q5N597"/>
<dbReference type="KEGG" id="syc:syc0331_c"/>
<dbReference type="eggNOG" id="COG0261">
    <property type="taxonomic scope" value="Bacteria"/>
</dbReference>
<dbReference type="Proteomes" id="UP000001175">
    <property type="component" value="Chromosome"/>
</dbReference>
<dbReference type="GO" id="GO:0005737">
    <property type="term" value="C:cytoplasm"/>
    <property type="evidence" value="ECO:0007669"/>
    <property type="project" value="UniProtKB-ARBA"/>
</dbReference>
<dbReference type="GO" id="GO:1990904">
    <property type="term" value="C:ribonucleoprotein complex"/>
    <property type="evidence" value="ECO:0007669"/>
    <property type="project" value="UniProtKB-KW"/>
</dbReference>
<dbReference type="GO" id="GO:0005840">
    <property type="term" value="C:ribosome"/>
    <property type="evidence" value="ECO:0007669"/>
    <property type="project" value="UniProtKB-KW"/>
</dbReference>
<dbReference type="GO" id="GO:0019843">
    <property type="term" value="F:rRNA binding"/>
    <property type="evidence" value="ECO:0007669"/>
    <property type="project" value="UniProtKB-UniRule"/>
</dbReference>
<dbReference type="GO" id="GO:0003735">
    <property type="term" value="F:structural constituent of ribosome"/>
    <property type="evidence" value="ECO:0007669"/>
    <property type="project" value="InterPro"/>
</dbReference>
<dbReference type="GO" id="GO:0006412">
    <property type="term" value="P:translation"/>
    <property type="evidence" value="ECO:0007669"/>
    <property type="project" value="UniProtKB-UniRule"/>
</dbReference>
<dbReference type="HAMAP" id="MF_01363">
    <property type="entry name" value="Ribosomal_bL21"/>
    <property type="match status" value="1"/>
</dbReference>
<dbReference type="InterPro" id="IPR028909">
    <property type="entry name" value="bL21-like"/>
</dbReference>
<dbReference type="InterPro" id="IPR036164">
    <property type="entry name" value="bL21-like_sf"/>
</dbReference>
<dbReference type="InterPro" id="IPR001787">
    <property type="entry name" value="Ribosomal_bL21"/>
</dbReference>
<dbReference type="InterPro" id="IPR018258">
    <property type="entry name" value="Ribosomal_bL21_CS"/>
</dbReference>
<dbReference type="NCBIfam" id="TIGR00061">
    <property type="entry name" value="L21"/>
    <property type="match status" value="1"/>
</dbReference>
<dbReference type="PANTHER" id="PTHR21349">
    <property type="entry name" value="50S RIBOSOMAL PROTEIN L21"/>
    <property type="match status" value="1"/>
</dbReference>
<dbReference type="PANTHER" id="PTHR21349:SF0">
    <property type="entry name" value="LARGE RIBOSOMAL SUBUNIT PROTEIN BL21M"/>
    <property type="match status" value="1"/>
</dbReference>
<dbReference type="Pfam" id="PF00829">
    <property type="entry name" value="Ribosomal_L21p"/>
    <property type="match status" value="1"/>
</dbReference>
<dbReference type="SUPFAM" id="SSF141091">
    <property type="entry name" value="L21p-like"/>
    <property type="match status" value="1"/>
</dbReference>
<dbReference type="PROSITE" id="PS01169">
    <property type="entry name" value="RIBOSOMAL_L21"/>
    <property type="match status" value="1"/>
</dbReference>
<feature type="chain" id="PRO_0000269406" description="Large ribosomal subunit protein bL21">
    <location>
        <begin position="1"/>
        <end position="127"/>
    </location>
</feature>
<proteinExistence type="inferred from homology"/>
<gene>
    <name evidence="1" type="primary">rplU</name>
    <name evidence="1" type="synonym">rpl21</name>
    <name type="ordered locus">syc0331_c</name>
</gene>
<protein>
    <recommendedName>
        <fullName evidence="1">Large ribosomal subunit protein bL21</fullName>
    </recommendedName>
    <alternativeName>
        <fullName evidence="2">50S ribosomal protein L21</fullName>
    </alternativeName>
</protein>
<sequence>MAYAIIEASDKQLWVEPGRFYDLDRLDADLDQSLTLDKVLLVQDEGAPQIGQPYVAGATVQVTVLSHPRGRKVTVYKMTPKKKTRKKQGHRQDLTRVLVESITVGGKVLTANAADLPKSEADIDAAG</sequence>
<organism>
    <name type="scientific">Synechococcus sp. (strain ATCC 27144 / PCC 6301 / SAUG 1402/1)</name>
    <name type="common">Anacystis nidulans</name>
    <dbReference type="NCBI Taxonomy" id="269084"/>
    <lineage>
        <taxon>Bacteria</taxon>
        <taxon>Bacillati</taxon>
        <taxon>Cyanobacteriota</taxon>
        <taxon>Cyanophyceae</taxon>
        <taxon>Synechococcales</taxon>
        <taxon>Synechococcaceae</taxon>
        <taxon>Synechococcus</taxon>
    </lineage>
</organism>
<evidence type="ECO:0000255" key="1">
    <source>
        <dbReference type="HAMAP-Rule" id="MF_01363"/>
    </source>
</evidence>
<evidence type="ECO:0000305" key="2"/>
<accession>Q5N597</accession>
<name>RL21_SYNP6</name>